<name>PANC_DESDA</name>
<protein>
    <recommendedName>
        <fullName evidence="1">Pantothenate synthetase</fullName>
        <shortName evidence="1">PS</shortName>
        <ecNumber evidence="1">6.3.2.1</ecNumber>
    </recommendedName>
    <alternativeName>
        <fullName evidence="1">Pantoate--beta-alanine ligase</fullName>
    </alternativeName>
    <alternativeName>
        <fullName evidence="1">Pantoate-activating enzyme</fullName>
    </alternativeName>
</protein>
<organism>
    <name type="scientific">Desulfovibrio desulfuricans (strain ATCC 27774 / DSM 6949 / MB)</name>
    <dbReference type="NCBI Taxonomy" id="525146"/>
    <lineage>
        <taxon>Bacteria</taxon>
        <taxon>Pseudomonadati</taxon>
        <taxon>Thermodesulfobacteriota</taxon>
        <taxon>Desulfovibrionia</taxon>
        <taxon>Desulfovibrionales</taxon>
        <taxon>Desulfovibrionaceae</taxon>
        <taxon>Desulfovibrio</taxon>
    </lineage>
</organism>
<accession>B8J4Q1</accession>
<reference key="1">
    <citation type="submission" date="2009-01" db="EMBL/GenBank/DDBJ databases">
        <title>Complete sequence of Desulfovibrio desulfuricans subsp. desulfuricans str. ATCC 27774.</title>
        <authorList>
            <consortium name="US DOE Joint Genome Institute"/>
            <person name="Lucas S."/>
            <person name="Copeland A."/>
            <person name="Lapidus A."/>
            <person name="Glavina del Rio T."/>
            <person name="Tice H."/>
            <person name="Bruce D."/>
            <person name="Goodwin L."/>
            <person name="Pitluck S."/>
            <person name="Sims D."/>
            <person name="Lu M."/>
            <person name="Kiss H."/>
            <person name="Meineke L."/>
            <person name="Brettin T."/>
            <person name="Detter J.C."/>
            <person name="Han C."/>
            <person name="Larimer F."/>
            <person name="Land M."/>
            <person name="Hauser L."/>
            <person name="Kyrpides N."/>
            <person name="Ovchinnikova G."/>
            <person name="Hazen T.C."/>
        </authorList>
    </citation>
    <scope>NUCLEOTIDE SEQUENCE [LARGE SCALE GENOMIC DNA]</scope>
    <source>
        <strain>ATCC 27774 / DSM 6949 / MB</strain>
    </source>
</reference>
<proteinExistence type="inferred from homology"/>
<comment type="function">
    <text evidence="1">Catalyzes the condensation of pantoate with beta-alanine in an ATP-dependent reaction via a pantoyl-adenylate intermediate.</text>
</comment>
<comment type="catalytic activity">
    <reaction evidence="1">
        <text>(R)-pantoate + beta-alanine + ATP = (R)-pantothenate + AMP + diphosphate + H(+)</text>
        <dbReference type="Rhea" id="RHEA:10912"/>
        <dbReference type="ChEBI" id="CHEBI:15378"/>
        <dbReference type="ChEBI" id="CHEBI:15980"/>
        <dbReference type="ChEBI" id="CHEBI:29032"/>
        <dbReference type="ChEBI" id="CHEBI:30616"/>
        <dbReference type="ChEBI" id="CHEBI:33019"/>
        <dbReference type="ChEBI" id="CHEBI:57966"/>
        <dbReference type="ChEBI" id="CHEBI:456215"/>
        <dbReference type="EC" id="6.3.2.1"/>
    </reaction>
</comment>
<comment type="pathway">
    <text evidence="1">Cofactor biosynthesis; (R)-pantothenate biosynthesis; (R)-pantothenate from (R)-pantoate and beta-alanine: step 1/1.</text>
</comment>
<comment type="subunit">
    <text evidence="1">Homodimer.</text>
</comment>
<comment type="subcellular location">
    <subcellularLocation>
        <location evidence="1">Cytoplasm</location>
    </subcellularLocation>
</comment>
<comment type="miscellaneous">
    <text evidence="1">The reaction proceeds by a bi uni uni bi ping pong mechanism.</text>
</comment>
<comment type="similarity">
    <text evidence="1">Belongs to the pantothenate synthetase family.</text>
</comment>
<feature type="chain" id="PRO_1000123409" description="Pantothenate synthetase">
    <location>
        <begin position="1"/>
        <end position="282"/>
    </location>
</feature>
<feature type="active site" description="Proton donor" evidence="1">
    <location>
        <position position="37"/>
    </location>
</feature>
<feature type="binding site" evidence="1">
    <location>
        <begin position="30"/>
        <end position="37"/>
    </location>
    <ligand>
        <name>ATP</name>
        <dbReference type="ChEBI" id="CHEBI:30616"/>
    </ligand>
</feature>
<feature type="binding site" evidence="1">
    <location>
        <position position="61"/>
    </location>
    <ligand>
        <name>(R)-pantoate</name>
        <dbReference type="ChEBI" id="CHEBI:15980"/>
    </ligand>
</feature>
<feature type="binding site" evidence="1">
    <location>
        <position position="61"/>
    </location>
    <ligand>
        <name>beta-alanine</name>
        <dbReference type="ChEBI" id="CHEBI:57966"/>
    </ligand>
</feature>
<feature type="binding site" evidence="1">
    <location>
        <begin position="147"/>
        <end position="150"/>
    </location>
    <ligand>
        <name>ATP</name>
        <dbReference type="ChEBI" id="CHEBI:30616"/>
    </ligand>
</feature>
<feature type="binding site" evidence="1">
    <location>
        <position position="153"/>
    </location>
    <ligand>
        <name>(R)-pantoate</name>
        <dbReference type="ChEBI" id="CHEBI:15980"/>
    </ligand>
</feature>
<feature type="binding site" evidence="1">
    <location>
        <position position="176"/>
    </location>
    <ligand>
        <name>ATP</name>
        <dbReference type="ChEBI" id="CHEBI:30616"/>
    </ligand>
</feature>
<feature type="binding site" evidence="1">
    <location>
        <begin position="184"/>
        <end position="187"/>
    </location>
    <ligand>
        <name>ATP</name>
        <dbReference type="ChEBI" id="CHEBI:30616"/>
    </ligand>
</feature>
<evidence type="ECO:0000255" key="1">
    <source>
        <dbReference type="HAMAP-Rule" id="MF_00158"/>
    </source>
</evidence>
<gene>
    <name evidence="1" type="primary">panC</name>
    <name type="ordered locus">Ddes_2286</name>
</gene>
<keyword id="KW-0067">ATP-binding</keyword>
<keyword id="KW-0963">Cytoplasm</keyword>
<keyword id="KW-0436">Ligase</keyword>
<keyword id="KW-0547">Nucleotide-binding</keyword>
<keyword id="KW-0566">Pantothenate biosynthesis</keyword>
<sequence length="282" mass="30995">MQIFTTPQQLAAQCRAWHAAGDDIALVPTMGYYHAGHEDLMAHGRTLAKRLVVSLFVNPAQFGPGEDLAAYPRDAERDTAIAASHGADAIFMPEPGSMYEADHATWVEVPDLARGLCGQSRPTHFRGVCTVVLKLFMLSAADVAVFGQKDWQQQAIIKRMVRDLNLPVRIETRPTVREADGLALSSRNVYLSPEERAQAPQIRQALLHAQKLAQEGAGSATLLREAVLRRWAELLPLGRLDYLTIVHPESLEPLDEVVGPALMACAVRMGKARLIDNILLHS</sequence>
<dbReference type="EC" id="6.3.2.1" evidence="1"/>
<dbReference type="EMBL" id="CP001358">
    <property type="protein sequence ID" value="ACL50181.1"/>
    <property type="molecule type" value="Genomic_DNA"/>
</dbReference>
<dbReference type="SMR" id="B8J4Q1"/>
<dbReference type="STRING" id="525146.Ddes_2286"/>
<dbReference type="KEGG" id="dds:Ddes_2286"/>
<dbReference type="eggNOG" id="COG0414">
    <property type="taxonomic scope" value="Bacteria"/>
</dbReference>
<dbReference type="HOGENOM" id="CLU_047148_0_0_7"/>
<dbReference type="UniPathway" id="UPA00028">
    <property type="reaction ID" value="UER00005"/>
</dbReference>
<dbReference type="GO" id="GO:0005829">
    <property type="term" value="C:cytosol"/>
    <property type="evidence" value="ECO:0007669"/>
    <property type="project" value="TreeGrafter"/>
</dbReference>
<dbReference type="GO" id="GO:0005524">
    <property type="term" value="F:ATP binding"/>
    <property type="evidence" value="ECO:0007669"/>
    <property type="project" value="UniProtKB-KW"/>
</dbReference>
<dbReference type="GO" id="GO:0004592">
    <property type="term" value="F:pantoate-beta-alanine ligase activity"/>
    <property type="evidence" value="ECO:0007669"/>
    <property type="project" value="UniProtKB-UniRule"/>
</dbReference>
<dbReference type="GO" id="GO:0015940">
    <property type="term" value="P:pantothenate biosynthetic process"/>
    <property type="evidence" value="ECO:0007669"/>
    <property type="project" value="UniProtKB-UniRule"/>
</dbReference>
<dbReference type="CDD" id="cd00560">
    <property type="entry name" value="PanC"/>
    <property type="match status" value="1"/>
</dbReference>
<dbReference type="Gene3D" id="3.40.50.620">
    <property type="entry name" value="HUPs"/>
    <property type="match status" value="1"/>
</dbReference>
<dbReference type="Gene3D" id="3.30.1300.10">
    <property type="entry name" value="Pantoate-beta-alanine ligase, C-terminal domain"/>
    <property type="match status" value="1"/>
</dbReference>
<dbReference type="HAMAP" id="MF_00158">
    <property type="entry name" value="PanC"/>
    <property type="match status" value="1"/>
</dbReference>
<dbReference type="InterPro" id="IPR003721">
    <property type="entry name" value="Pantoate_ligase"/>
</dbReference>
<dbReference type="InterPro" id="IPR042176">
    <property type="entry name" value="Pantoate_ligase_C"/>
</dbReference>
<dbReference type="InterPro" id="IPR014729">
    <property type="entry name" value="Rossmann-like_a/b/a_fold"/>
</dbReference>
<dbReference type="NCBIfam" id="TIGR00018">
    <property type="entry name" value="panC"/>
    <property type="match status" value="1"/>
</dbReference>
<dbReference type="PANTHER" id="PTHR21299">
    <property type="entry name" value="CYTIDYLATE KINASE/PANTOATE-BETA-ALANINE LIGASE"/>
    <property type="match status" value="1"/>
</dbReference>
<dbReference type="PANTHER" id="PTHR21299:SF1">
    <property type="entry name" value="PANTOATE--BETA-ALANINE LIGASE"/>
    <property type="match status" value="1"/>
</dbReference>
<dbReference type="Pfam" id="PF02569">
    <property type="entry name" value="Pantoate_ligase"/>
    <property type="match status" value="1"/>
</dbReference>
<dbReference type="SUPFAM" id="SSF52374">
    <property type="entry name" value="Nucleotidylyl transferase"/>
    <property type="match status" value="1"/>
</dbReference>